<comment type="function">
    <text evidence="1">The beta subunit is responsible for the synthesis of L-tryptophan from indole and L-serine.</text>
</comment>
<comment type="catalytic activity">
    <reaction evidence="1">
        <text>(1S,2R)-1-C-(indol-3-yl)glycerol 3-phosphate + L-serine = D-glyceraldehyde 3-phosphate + L-tryptophan + H2O</text>
        <dbReference type="Rhea" id="RHEA:10532"/>
        <dbReference type="ChEBI" id="CHEBI:15377"/>
        <dbReference type="ChEBI" id="CHEBI:33384"/>
        <dbReference type="ChEBI" id="CHEBI:57912"/>
        <dbReference type="ChEBI" id="CHEBI:58866"/>
        <dbReference type="ChEBI" id="CHEBI:59776"/>
        <dbReference type="EC" id="4.2.1.20"/>
    </reaction>
</comment>
<comment type="cofactor">
    <cofactor evidence="1">
        <name>pyridoxal 5'-phosphate</name>
        <dbReference type="ChEBI" id="CHEBI:597326"/>
    </cofactor>
</comment>
<comment type="pathway">
    <text evidence="1">Amino-acid biosynthesis; L-tryptophan biosynthesis; L-tryptophan from chorismate: step 5/5.</text>
</comment>
<comment type="subunit">
    <text evidence="1">Tetramer of two alpha and two beta chains.</text>
</comment>
<comment type="similarity">
    <text evidence="1">Belongs to the TrpB family.</text>
</comment>
<reference key="1">
    <citation type="journal article" date="2005" name="Infect. Immun.">
        <title>Whole-genome analyses of speciation events in pathogenic Brucellae.</title>
        <authorList>
            <person name="Chain P.S."/>
            <person name="Comerci D.J."/>
            <person name="Tolmasky M.E."/>
            <person name="Larimer F.W."/>
            <person name="Malfatti S.A."/>
            <person name="Vergez L.M."/>
            <person name="Aguero F."/>
            <person name="Land M.L."/>
            <person name="Ugalde R.A."/>
            <person name="Garcia E."/>
        </authorList>
    </citation>
    <scope>NUCLEOTIDE SEQUENCE [LARGE SCALE GENOMIC DNA]</scope>
    <source>
        <strain>2308</strain>
    </source>
</reference>
<protein>
    <recommendedName>
        <fullName evidence="1">Tryptophan synthase beta chain</fullName>
        <ecNumber evidence="1">4.2.1.20</ecNumber>
    </recommendedName>
</protein>
<keyword id="KW-0028">Amino-acid biosynthesis</keyword>
<keyword id="KW-0057">Aromatic amino acid biosynthesis</keyword>
<keyword id="KW-0456">Lyase</keyword>
<keyword id="KW-0663">Pyridoxal phosphate</keyword>
<keyword id="KW-1185">Reference proteome</keyword>
<keyword id="KW-0822">Tryptophan biosynthesis</keyword>
<sequence>MNKPVAPNSYKTGPDEEGMFGIFGGRFVAETLMPLILELQQAYETARNDPEFKAELNALSTFYAGRPSKLYYAEGLSKHLGGAKIYFKREDLNHTGSHKINNCLGQILLAKRMGKTRIIAETGAGQHGVASATVAARFGLPCIVYVGATDVERQKPNVFRMKLLGAEVKPVSAGNGTLKDAMNEALRDWVTNVEDTYYLIGTAAGPHPYPELVRDFQSVIGTEARQQILEQEGRLPDVIVAAVGGGSNAIGLFHPFLDDASVKIVGVEAGGRGLEGEEHCASMSAGRPGVLHGNRTYLLQNADGQILEGHSVSAGLDYPGVGPEHSWLKDSGRVDYVPILDNEALDAFQLCTRTEGIIPALESAHAIAQAVKMAPTMGKDKVMIVNLSGRGDKDVHTVGKLLGMDI</sequence>
<organism>
    <name type="scientific">Brucella abortus (strain 2308)</name>
    <dbReference type="NCBI Taxonomy" id="359391"/>
    <lineage>
        <taxon>Bacteria</taxon>
        <taxon>Pseudomonadati</taxon>
        <taxon>Pseudomonadota</taxon>
        <taxon>Alphaproteobacteria</taxon>
        <taxon>Hyphomicrobiales</taxon>
        <taxon>Brucellaceae</taxon>
        <taxon>Brucella/Ochrobactrum group</taxon>
        <taxon>Brucella</taxon>
    </lineage>
</organism>
<dbReference type="EC" id="4.2.1.20" evidence="1"/>
<dbReference type="EMBL" id="AM040264">
    <property type="protein sequence ID" value="CAJ12068.1"/>
    <property type="molecule type" value="Genomic_DNA"/>
</dbReference>
<dbReference type="SMR" id="Q2YQW5"/>
<dbReference type="STRING" id="359391.BAB1_2112"/>
<dbReference type="KEGG" id="bmf:BAB1_2112"/>
<dbReference type="PATRIC" id="fig|359391.11.peg.1343"/>
<dbReference type="HOGENOM" id="CLU_016734_3_1_5"/>
<dbReference type="UniPathway" id="UPA00035">
    <property type="reaction ID" value="UER00044"/>
</dbReference>
<dbReference type="Proteomes" id="UP000002719">
    <property type="component" value="Chromosome I"/>
</dbReference>
<dbReference type="GO" id="GO:0005737">
    <property type="term" value="C:cytoplasm"/>
    <property type="evidence" value="ECO:0007669"/>
    <property type="project" value="TreeGrafter"/>
</dbReference>
<dbReference type="GO" id="GO:0004834">
    <property type="term" value="F:tryptophan synthase activity"/>
    <property type="evidence" value="ECO:0007669"/>
    <property type="project" value="UniProtKB-UniRule"/>
</dbReference>
<dbReference type="CDD" id="cd06446">
    <property type="entry name" value="Trp-synth_B"/>
    <property type="match status" value="1"/>
</dbReference>
<dbReference type="FunFam" id="3.40.50.1100:FF:000001">
    <property type="entry name" value="Tryptophan synthase beta chain"/>
    <property type="match status" value="1"/>
</dbReference>
<dbReference type="FunFam" id="3.40.50.1100:FF:000004">
    <property type="entry name" value="Tryptophan synthase beta chain"/>
    <property type="match status" value="1"/>
</dbReference>
<dbReference type="Gene3D" id="3.40.50.1100">
    <property type="match status" value="2"/>
</dbReference>
<dbReference type="HAMAP" id="MF_00133">
    <property type="entry name" value="Trp_synth_beta"/>
    <property type="match status" value="1"/>
</dbReference>
<dbReference type="InterPro" id="IPR006653">
    <property type="entry name" value="Trp_synth_b_CS"/>
</dbReference>
<dbReference type="InterPro" id="IPR006654">
    <property type="entry name" value="Trp_synth_beta"/>
</dbReference>
<dbReference type="InterPro" id="IPR023026">
    <property type="entry name" value="Trp_synth_beta/beta-like"/>
</dbReference>
<dbReference type="InterPro" id="IPR001926">
    <property type="entry name" value="TrpB-like_PALP"/>
</dbReference>
<dbReference type="InterPro" id="IPR036052">
    <property type="entry name" value="TrpB-like_PALP_sf"/>
</dbReference>
<dbReference type="NCBIfam" id="TIGR00263">
    <property type="entry name" value="trpB"/>
    <property type="match status" value="1"/>
</dbReference>
<dbReference type="PANTHER" id="PTHR48077:SF3">
    <property type="entry name" value="TRYPTOPHAN SYNTHASE"/>
    <property type="match status" value="1"/>
</dbReference>
<dbReference type="PANTHER" id="PTHR48077">
    <property type="entry name" value="TRYPTOPHAN SYNTHASE-RELATED"/>
    <property type="match status" value="1"/>
</dbReference>
<dbReference type="Pfam" id="PF00291">
    <property type="entry name" value="PALP"/>
    <property type="match status" value="1"/>
</dbReference>
<dbReference type="PIRSF" id="PIRSF001413">
    <property type="entry name" value="Trp_syn_beta"/>
    <property type="match status" value="1"/>
</dbReference>
<dbReference type="SUPFAM" id="SSF53686">
    <property type="entry name" value="Tryptophan synthase beta subunit-like PLP-dependent enzymes"/>
    <property type="match status" value="1"/>
</dbReference>
<dbReference type="PROSITE" id="PS00168">
    <property type="entry name" value="TRP_SYNTHASE_BETA"/>
    <property type="match status" value="1"/>
</dbReference>
<name>TRPB_BRUA2</name>
<accession>Q2YQW5</accession>
<gene>
    <name evidence="1" type="primary">trpB</name>
    <name type="ordered locus">BAB1_2112</name>
</gene>
<feature type="chain" id="PRO_1000018329" description="Tryptophan synthase beta chain">
    <location>
        <begin position="1"/>
        <end position="406"/>
    </location>
</feature>
<feature type="modified residue" description="N6-(pyridoxal phosphate)lysine" evidence="1">
    <location>
        <position position="99"/>
    </location>
</feature>
<evidence type="ECO:0000255" key="1">
    <source>
        <dbReference type="HAMAP-Rule" id="MF_00133"/>
    </source>
</evidence>
<proteinExistence type="inferred from homology"/>